<feature type="chain" id="PRO_0000124780" description="Membrane protein insertase YidC">
    <location>
        <begin position="1"/>
        <end position="205"/>
    </location>
</feature>
<feature type="transmembrane region" description="Helical" evidence="2">
    <location>
        <begin position="26"/>
        <end position="46"/>
    </location>
</feature>
<feature type="transmembrane region" description="Helical" evidence="2">
    <location>
        <begin position="92"/>
        <end position="112"/>
    </location>
</feature>
<feature type="transmembrane region" description="Helical" evidence="2">
    <location>
        <begin position="181"/>
        <end position="201"/>
    </location>
</feature>
<sequence>MSYIYNLLKQFLAFLLNTTDKYVGNFGISIIIVTILIKIILLPLTLKQDKSMKEMKKLQPELEKIKQKYANDKQMLNIKTMELYREHKVNPLGGCLPILVQLPILFALFGVLRSGIIPADSSFLWMRLADPDPFYVLPVLNGAVSFLQQKLMGTSDNAQMKNMMYVFPIMMIVISYRMPSGLQLYWLTSSLIAVIQQYFIMKKGA</sequence>
<reference key="1">
    <citation type="journal article" date="2002" name="J. Bacteriol.">
        <title>Genome sequence and analysis of the oral bacterium Fusobacterium nucleatum strain ATCC 25586.</title>
        <authorList>
            <person name="Kapatral V."/>
            <person name="Anderson I."/>
            <person name="Ivanova N."/>
            <person name="Reznik G."/>
            <person name="Los T."/>
            <person name="Lykidis A."/>
            <person name="Bhattacharyya A."/>
            <person name="Bartman A."/>
            <person name="Gardner W."/>
            <person name="Grechkin G."/>
            <person name="Zhu L."/>
            <person name="Vasieva O."/>
            <person name="Chu L."/>
            <person name="Kogan Y."/>
            <person name="Chaga O."/>
            <person name="Goltsman E."/>
            <person name="Bernal A."/>
            <person name="Larsen N."/>
            <person name="D'Souza M."/>
            <person name="Walunas T."/>
            <person name="Pusch G."/>
            <person name="Haselkorn R."/>
            <person name="Fonstein M."/>
            <person name="Kyrpides N.C."/>
            <person name="Overbeek R."/>
        </authorList>
    </citation>
    <scope>NUCLEOTIDE SEQUENCE [LARGE SCALE GENOMIC DNA]</scope>
    <source>
        <strain>ATCC 25586 / DSM 15643 / BCRC 10681 / CIP 101130 / JCM 8532 / KCTC 2640 / LMG 13131 / VPI 4355</strain>
    </source>
</reference>
<protein>
    <recommendedName>
        <fullName>Membrane protein insertase YidC</fullName>
    </recommendedName>
    <alternativeName>
        <fullName>Foldase YidC</fullName>
    </alternativeName>
    <alternativeName>
        <fullName>Membrane integrase YidC</fullName>
    </alternativeName>
    <alternativeName>
        <fullName>Membrane protein YidC</fullName>
    </alternativeName>
</protein>
<keyword id="KW-0997">Cell inner membrane</keyword>
<keyword id="KW-1003">Cell membrane</keyword>
<keyword id="KW-0143">Chaperone</keyword>
<keyword id="KW-0472">Membrane</keyword>
<keyword id="KW-0653">Protein transport</keyword>
<keyword id="KW-1185">Reference proteome</keyword>
<keyword id="KW-0812">Transmembrane</keyword>
<keyword id="KW-1133">Transmembrane helix</keyword>
<keyword id="KW-0813">Transport</keyword>
<dbReference type="EMBL" id="AE009951">
    <property type="protein sequence ID" value="AAL94217.1"/>
    <property type="molecule type" value="Genomic_DNA"/>
</dbReference>
<dbReference type="RefSeq" id="NP_602918.1">
    <property type="nucleotide sequence ID" value="NC_003454.1"/>
</dbReference>
<dbReference type="RefSeq" id="WP_005903598.1">
    <property type="nucleotide sequence ID" value="NZ_OZ209243.1"/>
</dbReference>
<dbReference type="SMR" id="Q8RHA4"/>
<dbReference type="FunCoup" id="Q8RHA4">
    <property type="interactions" value="285"/>
</dbReference>
<dbReference type="STRING" id="190304.FN0004"/>
<dbReference type="PaxDb" id="190304-FN0004"/>
<dbReference type="EnsemblBacteria" id="AAL94217">
    <property type="protein sequence ID" value="AAL94217"/>
    <property type="gene ID" value="FN0004"/>
</dbReference>
<dbReference type="KEGG" id="fnu:FN0004"/>
<dbReference type="PATRIC" id="fig|190304.8.peg.596"/>
<dbReference type="eggNOG" id="COG0706">
    <property type="taxonomic scope" value="Bacteria"/>
</dbReference>
<dbReference type="HOGENOM" id="CLU_036138_4_2_0"/>
<dbReference type="InParanoid" id="Q8RHA4"/>
<dbReference type="BioCyc" id="FNUC190304:G1FZS-618-MONOMER"/>
<dbReference type="Proteomes" id="UP000002521">
    <property type="component" value="Chromosome"/>
</dbReference>
<dbReference type="GO" id="GO:0005886">
    <property type="term" value="C:plasma membrane"/>
    <property type="evidence" value="ECO:0000318"/>
    <property type="project" value="GO_Central"/>
</dbReference>
<dbReference type="GO" id="GO:0032977">
    <property type="term" value="F:membrane insertase activity"/>
    <property type="evidence" value="ECO:0000318"/>
    <property type="project" value="GO_Central"/>
</dbReference>
<dbReference type="GO" id="GO:0051205">
    <property type="term" value="P:protein insertion into membrane"/>
    <property type="evidence" value="ECO:0000318"/>
    <property type="project" value="GO_Central"/>
</dbReference>
<dbReference type="GO" id="GO:0015031">
    <property type="term" value="P:protein transport"/>
    <property type="evidence" value="ECO:0007669"/>
    <property type="project" value="UniProtKB-KW"/>
</dbReference>
<dbReference type="CDD" id="cd20070">
    <property type="entry name" value="5TM_YidC_Alb3"/>
    <property type="match status" value="1"/>
</dbReference>
<dbReference type="InterPro" id="IPR001708">
    <property type="entry name" value="YidC/ALB3/OXA1/COX18"/>
</dbReference>
<dbReference type="InterPro" id="IPR028055">
    <property type="entry name" value="YidC/Oxa/ALB_C"/>
</dbReference>
<dbReference type="InterPro" id="IPR047196">
    <property type="entry name" value="YidC_ALB_C"/>
</dbReference>
<dbReference type="NCBIfam" id="TIGR03592">
    <property type="entry name" value="yidC_oxa1_cterm"/>
    <property type="match status" value="1"/>
</dbReference>
<dbReference type="PANTHER" id="PTHR12428:SF65">
    <property type="entry name" value="CYTOCHROME C OXIDASE ASSEMBLY PROTEIN COX18, MITOCHONDRIAL"/>
    <property type="match status" value="1"/>
</dbReference>
<dbReference type="PANTHER" id="PTHR12428">
    <property type="entry name" value="OXA1"/>
    <property type="match status" value="1"/>
</dbReference>
<dbReference type="Pfam" id="PF02096">
    <property type="entry name" value="60KD_IMP"/>
    <property type="match status" value="1"/>
</dbReference>
<dbReference type="PRINTS" id="PR00701">
    <property type="entry name" value="60KDINNERMP"/>
</dbReference>
<dbReference type="PRINTS" id="PR01900">
    <property type="entry name" value="YIDCPROTEIN"/>
</dbReference>
<comment type="function">
    <text evidence="1">Required for the insertion and/or proper folding and/or complex formation of integral membrane proteins into the membrane. Involved in integration of membrane proteins that insert both dependently and independently of the Sec translocase complex, as well as at least some lipoproteins. Aids folding of multispanning membrane proteins (By similarity).</text>
</comment>
<comment type="subunit">
    <text evidence="1">Interacts with the Sec translocase complex via SecD. Specifically interacts with transmembrane segments of nascent integral membrane proteins during membrane integration (By similarity).</text>
</comment>
<comment type="subcellular location">
    <subcellularLocation>
        <location evidence="1">Cell inner membrane</location>
        <topology evidence="1">Multi-pass membrane protein</topology>
    </subcellularLocation>
</comment>
<comment type="similarity">
    <text evidence="3">Belongs to the OXA1/ALB3/YidC family. Type 1 subfamily.</text>
</comment>
<accession>Q8RHA4</accession>
<proteinExistence type="inferred from homology"/>
<gene>
    <name type="primary">yidC</name>
    <name type="ordered locus">FN0004</name>
</gene>
<name>YIDC_FUSNN</name>
<organism>
    <name type="scientific">Fusobacterium nucleatum subsp. nucleatum (strain ATCC 25586 / DSM 15643 / BCRC 10681 / CIP 101130 / JCM 8532 / KCTC 2640 / LMG 13131 / VPI 4355)</name>
    <dbReference type="NCBI Taxonomy" id="190304"/>
    <lineage>
        <taxon>Bacteria</taxon>
        <taxon>Fusobacteriati</taxon>
        <taxon>Fusobacteriota</taxon>
        <taxon>Fusobacteriia</taxon>
        <taxon>Fusobacteriales</taxon>
        <taxon>Fusobacteriaceae</taxon>
        <taxon>Fusobacterium</taxon>
    </lineage>
</organism>
<evidence type="ECO:0000250" key="1"/>
<evidence type="ECO:0000255" key="2"/>
<evidence type="ECO:0000305" key="3"/>